<dbReference type="EMBL" id="L77119">
    <property type="protein sequence ID" value="AAC37067.1"/>
    <property type="molecule type" value="Genomic_DNA"/>
</dbReference>
<dbReference type="PIR" id="A64517">
    <property type="entry name" value="A64517"/>
</dbReference>
<dbReference type="PaxDb" id="243232-MJ_ECS09"/>
<dbReference type="EnsemblBacteria" id="AAC37067">
    <property type="protein sequence ID" value="AAC37067"/>
    <property type="gene ID" value="MJ_ECS09"/>
</dbReference>
<dbReference type="KEGG" id="mja:MJ_ECS09"/>
<dbReference type="HOGENOM" id="CLU_1168579_0_0_2"/>
<dbReference type="InParanoid" id="Q60308"/>
<dbReference type="Proteomes" id="UP000000805">
    <property type="component" value="Plasmid pDSM2661_2"/>
</dbReference>
<keyword id="KW-0614">Plasmid</keyword>
<keyword id="KW-1185">Reference proteome</keyword>
<name>Y3409_METJA</name>
<feature type="chain" id="PRO_0000107490" description="Uncharacterized protein MJECS09">
    <location>
        <begin position="1"/>
        <end position="237"/>
    </location>
</feature>
<reference key="1">
    <citation type="journal article" date="1996" name="Science">
        <title>Complete genome sequence of the methanogenic archaeon, Methanococcus jannaschii.</title>
        <authorList>
            <person name="Bult C.J."/>
            <person name="White O."/>
            <person name="Olsen G.J."/>
            <person name="Zhou L."/>
            <person name="Fleischmann R.D."/>
            <person name="Sutton G.G."/>
            <person name="Blake J.A."/>
            <person name="FitzGerald L.M."/>
            <person name="Clayton R.A."/>
            <person name="Gocayne J.D."/>
            <person name="Kerlavage A.R."/>
            <person name="Dougherty B.A."/>
            <person name="Tomb J.-F."/>
            <person name="Adams M.D."/>
            <person name="Reich C.I."/>
            <person name="Overbeek R."/>
            <person name="Kirkness E.F."/>
            <person name="Weinstock K.G."/>
            <person name="Merrick J.M."/>
            <person name="Glodek A."/>
            <person name="Scott J.L."/>
            <person name="Geoghagen N.S.M."/>
            <person name="Weidman J.F."/>
            <person name="Fuhrmann J.L."/>
            <person name="Nguyen D."/>
            <person name="Utterback T.R."/>
            <person name="Kelley J.M."/>
            <person name="Peterson J.D."/>
            <person name="Sadow P.W."/>
            <person name="Hanna M.C."/>
            <person name="Cotton M.D."/>
            <person name="Roberts K.M."/>
            <person name="Hurst M.A."/>
            <person name="Kaine B.P."/>
            <person name="Borodovsky M."/>
            <person name="Klenk H.-P."/>
            <person name="Fraser C.M."/>
            <person name="Smith H.O."/>
            <person name="Woese C.R."/>
            <person name="Venter J.C."/>
        </authorList>
    </citation>
    <scope>NUCLEOTIDE SEQUENCE [LARGE SCALE GENOMIC DNA]</scope>
    <source>
        <strain>ATCC 43067 / DSM 2661 / JAL-1 / JCM 10045 / NBRC 100440</strain>
    </source>
</reference>
<accession>Q60308</accession>
<organism>
    <name type="scientific">Methanocaldococcus jannaschii (strain ATCC 43067 / DSM 2661 / JAL-1 / JCM 10045 / NBRC 100440)</name>
    <name type="common">Methanococcus jannaschii</name>
    <dbReference type="NCBI Taxonomy" id="243232"/>
    <lineage>
        <taxon>Archaea</taxon>
        <taxon>Methanobacteriati</taxon>
        <taxon>Methanobacteriota</taxon>
        <taxon>Methanomada group</taxon>
        <taxon>Methanococci</taxon>
        <taxon>Methanococcales</taxon>
        <taxon>Methanocaldococcaceae</taxon>
        <taxon>Methanocaldococcus</taxon>
    </lineage>
</organism>
<protein>
    <recommendedName>
        <fullName>Uncharacterized protein MJECS09</fullName>
    </recommendedName>
</protein>
<geneLocation type="plasmid">
    <name>small ECE</name>
</geneLocation>
<sequence length="237" mass="28011">MPLPEYGTDNSDNFVRFIYFEIKKNSVKPPSFPKLGKYLENHCKGGDYMCVINNYIYFLIIIDLEYLVKWIKCYSDNVLKGTIKLLTNYYSKLYYIKLSLSHWLFSLCNLPLEDEMLFLSCGSLVKYQDASTHKLYKLEYLTKLILGYNRINVDNCICSIKVFAISTFERFLYHEFENNAFKLIMLHKRTSFNVYKVKTSKIALLNILEKIGRTYKRYLHTLKTPKNLTTTEVVRHG</sequence>
<proteinExistence type="predicted"/>
<gene>
    <name type="ordered locus">MJECS09</name>
</gene>